<gene>
    <name evidence="1" type="primary">pyrB</name>
    <name type="ordered locus">Ddes_1871</name>
</gene>
<evidence type="ECO:0000255" key="1">
    <source>
        <dbReference type="HAMAP-Rule" id="MF_00001"/>
    </source>
</evidence>
<name>PYRB_DESDA</name>
<comment type="function">
    <text evidence="1">Catalyzes the condensation of carbamoyl phosphate and aspartate to form carbamoyl aspartate and inorganic phosphate, the committed step in the de novo pyrimidine nucleotide biosynthesis pathway.</text>
</comment>
<comment type="catalytic activity">
    <reaction evidence="1">
        <text>carbamoyl phosphate + L-aspartate = N-carbamoyl-L-aspartate + phosphate + H(+)</text>
        <dbReference type="Rhea" id="RHEA:20013"/>
        <dbReference type="ChEBI" id="CHEBI:15378"/>
        <dbReference type="ChEBI" id="CHEBI:29991"/>
        <dbReference type="ChEBI" id="CHEBI:32814"/>
        <dbReference type="ChEBI" id="CHEBI:43474"/>
        <dbReference type="ChEBI" id="CHEBI:58228"/>
        <dbReference type="EC" id="2.1.3.2"/>
    </reaction>
</comment>
<comment type="pathway">
    <text evidence="1">Pyrimidine metabolism; UMP biosynthesis via de novo pathway; (S)-dihydroorotate from bicarbonate: step 2/3.</text>
</comment>
<comment type="subunit">
    <text evidence="1">Heterododecamer (2C3:3R2) of six catalytic PyrB chains organized as two trimers (C3), and six regulatory PyrI chains organized as three dimers (R2).</text>
</comment>
<comment type="similarity">
    <text evidence="1">Belongs to the aspartate/ornithine carbamoyltransferase superfamily. ATCase family.</text>
</comment>
<keyword id="KW-0665">Pyrimidine biosynthesis</keyword>
<keyword id="KW-0808">Transferase</keyword>
<organism>
    <name type="scientific">Desulfovibrio desulfuricans (strain ATCC 27774 / DSM 6949 / MB)</name>
    <dbReference type="NCBI Taxonomy" id="525146"/>
    <lineage>
        <taxon>Bacteria</taxon>
        <taxon>Pseudomonadati</taxon>
        <taxon>Thermodesulfobacteriota</taxon>
        <taxon>Desulfovibrionia</taxon>
        <taxon>Desulfovibrionales</taxon>
        <taxon>Desulfovibrionaceae</taxon>
        <taxon>Desulfovibrio</taxon>
    </lineage>
</organism>
<accession>B8J2A8</accession>
<protein>
    <recommendedName>
        <fullName evidence="1">Aspartate carbamoyltransferase catalytic subunit</fullName>
        <ecNumber evidence="1">2.1.3.2</ecNumber>
    </recommendedName>
    <alternativeName>
        <fullName evidence="1">Aspartate transcarbamylase</fullName>
        <shortName evidence="1">ATCase</shortName>
    </alternativeName>
</protein>
<sequence length="318" mass="34606">MNTDNRYHWPHKDLLDVTQLSRADTLHLLDLAASFQEINSRPVKKVPTLKGKTVVLFFVENSTRTKTSFDVAGKRLSADTFALGKSGSSLNKGESLKDTALTLQAMSPDVIVMRHSSSGAARYVADLLPCGVVNGGDGWHAHPTQALLDCFSLREAWANSFEGRTLLILGDIAHSRVARSNIHLLTSLGVRIRVCAPRTLLPAGVDHWPVEVYTDLRQAVRDVDAVMCLRLQLERQQAGLLPDLAEYSRRFCLGLEHMALARPGAGVLHPGPMNRGLEISDDMADAPASLVLDQVAAGVATRMAVLYLLATRNDGGRA</sequence>
<reference key="1">
    <citation type="submission" date="2009-01" db="EMBL/GenBank/DDBJ databases">
        <title>Complete sequence of Desulfovibrio desulfuricans subsp. desulfuricans str. ATCC 27774.</title>
        <authorList>
            <consortium name="US DOE Joint Genome Institute"/>
            <person name="Lucas S."/>
            <person name="Copeland A."/>
            <person name="Lapidus A."/>
            <person name="Glavina del Rio T."/>
            <person name="Tice H."/>
            <person name="Bruce D."/>
            <person name="Goodwin L."/>
            <person name="Pitluck S."/>
            <person name="Sims D."/>
            <person name="Lu M."/>
            <person name="Kiss H."/>
            <person name="Meineke L."/>
            <person name="Brettin T."/>
            <person name="Detter J.C."/>
            <person name="Han C."/>
            <person name="Larimer F."/>
            <person name="Land M."/>
            <person name="Hauser L."/>
            <person name="Kyrpides N."/>
            <person name="Ovchinnikova G."/>
            <person name="Hazen T.C."/>
        </authorList>
    </citation>
    <scope>NUCLEOTIDE SEQUENCE [LARGE SCALE GENOMIC DNA]</scope>
    <source>
        <strain>ATCC 27774 / DSM 6949 / MB</strain>
    </source>
</reference>
<proteinExistence type="inferred from homology"/>
<feature type="chain" id="PRO_1000116137" description="Aspartate carbamoyltransferase catalytic subunit">
    <location>
        <begin position="1"/>
        <end position="318"/>
    </location>
</feature>
<feature type="binding site" evidence="1">
    <location>
        <position position="64"/>
    </location>
    <ligand>
        <name>carbamoyl phosphate</name>
        <dbReference type="ChEBI" id="CHEBI:58228"/>
    </ligand>
</feature>
<feature type="binding site" evidence="1">
    <location>
        <position position="65"/>
    </location>
    <ligand>
        <name>carbamoyl phosphate</name>
        <dbReference type="ChEBI" id="CHEBI:58228"/>
    </ligand>
</feature>
<feature type="binding site" evidence="1">
    <location>
        <position position="92"/>
    </location>
    <ligand>
        <name>L-aspartate</name>
        <dbReference type="ChEBI" id="CHEBI:29991"/>
    </ligand>
</feature>
<feature type="binding site" evidence="1">
    <location>
        <position position="114"/>
    </location>
    <ligand>
        <name>carbamoyl phosphate</name>
        <dbReference type="ChEBI" id="CHEBI:58228"/>
    </ligand>
</feature>
<feature type="binding site" evidence="1">
    <location>
        <position position="142"/>
    </location>
    <ligand>
        <name>carbamoyl phosphate</name>
        <dbReference type="ChEBI" id="CHEBI:58228"/>
    </ligand>
</feature>
<feature type="binding site" evidence="1">
    <location>
        <position position="145"/>
    </location>
    <ligand>
        <name>carbamoyl phosphate</name>
        <dbReference type="ChEBI" id="CHEBI:58228"/>
    </ligand>
</feature>
<feature type="binding site" evidence="1">
    <location>
        <position position="176"/>
    </location>
    <ligand>
        <name>L-aspartate</name>
        <dbReference type="ChEBI" id="CHEBI:29991"/>
    </ligand>
</feature>
<feature type="binding site" evidence="1">
    <location>
        <position position="230"/>
    </location>
    <ligand>
        <name>L-aspartate</name>
        <dbReference type="ChEBI" id="CHEBI:29991"/>
    </ligand>
</feature>
<feature type="binding site" evidence="1">
    <location>
        <position position="271"/>
    </location>
    <ligand>
        <name>carbamoyl phosphate</name>
        <dbReference type="ChEBI" id="CHEBI:58228"/>
    </ligand>
</feature>
<feature type="binding site" evidence="1">
    <location>
        <position position="272"/>
    </location>
    <ligand>
        <name>carbamoyl phosphate</name>
        <dbReference type="ChEBI" id="CHEBI:58228"/>
    </ligand>
</feature>
<dbReference type="EC" id="2.1.3.2" evidence="1"/>
<dbReference type="EMBL" id="CP001358">
    <property type="protein sequence ID" value="ACL49767.1"/>
    <property type="molecule type" value="Genomic_DNA"/>
</dbReference>
<dbReference type="SMR" id="B8J2A8"/>
<dbReference type="STRING" id="525146.Ddes_1871"/>
<dbReference type="KEGG" id="dds:Ddes_1871"/>
<dbReference type="eggNOG" id="COG0540">
    <property type="taxonomic scope" value="Bacteria"/>
</dbReference>
<dbReference type="HOGENOM" id="CLU_043846_2_0_7"/>
<dbReference type="UniPathway" id="UPA00070">
    <property type="reaction ID" value="UER00116"/>
</dbReference>
<dbReference type="GO" id="GO:0005829">
    <property type="term" value="C:cytosol"/>
    <property type="evidence" value="ECO:0007669"/>
    <property type="project" value="TreeGrafter"/>
</dbReference>
<dbReference type="GO" id="GO:0016597">
    <property type="term" value="F:amino acid binding"/>
    <property type="evidence" value="ECO:0007669"/>
    <property type="project" value="InterPro"/>
</dbReference>
<dbReference type="GO" id="GO:0004070">
    <property type="term" value="F:aspartate carbamoyltransferase activity"/>
    <property type="evidence" value="ECO:0007669"/>
    <property type="project" value="UniProtKB-UniRule"/>
</dbReference>
<dbReference type="GO" id="GO:0006207">
    <property type="term" value="P:'de novo' pyrimidine nucleobase biosynthetic process"/>
    <property type="evidence" value="ECO:0007669"/>
    <property type="project" value="InterPro"/>
</dbReference>
<dbReference type="GO" id="GO:0044205">
    <property type="term" value="P:'de novo' UMP biosynthetic process"/>
    <property type="evidence" value="ECO:0007669"/>
    <property type="project" value="UniProtKB-UniRule"/>
</dbReference>
<dbReference type="GO" id="GO:0006520">
    <property type="term" value="P:amino acid metabolic process"/>
    <property type="evidence" value="ECO:0007669"/>
    <property type="project" value="InterPro"/>
</dbReference>
<dbReference type="Gene3D" id="3.40.50.1370">
    <property type="entry name" value="Aspartate/ornithine carbamoyltransferase"/>
    <property type="match status" value="2"/>
</dbReference>
<dbReference type="HAMAP" id="MF_00001">
    <property type="entry name" value="Asp_carb_tr"/>
    <property type="match status" value="1"/>
</dbReference>
<dbReference type="InterPro" id="IPR006132">
    <property type="entry name" value="Asp/Orn_carbamoyltranf_P-bd"/>
</dbReference>
<dbReference type="InterPro" id="IPR006130">
    <property type="entry name" value="Asp/Orn_carbamoylTrfase"/>
</dbReference>
<dbReference type="InterPro" id="IPR036901">
    <property type="entry name" value="Asp/Orn_carbamoylTrfase_sf"/>
</dbReference>
<dbReference type="InterPro" id="IPR002082">
    <property type="entry name" value="Asp_carbamoyltransf"/>
</dbReference>
<dbReference type="InterPro" id="IPR006131">
    <property type="entry name" value="Asp_carbamoyltransf_Asp/Orn-bd"/>
</dbReference>
<dbReference type="NCBIfam" id="TIGR00670">
    <property type="entry name" value="asp_carb_tr"/>
    <property type="match status" value="1"/>
</dbReference>
<dbReference type="NCBIfam" id="NF002032">
    <property type="entry name" value="PRK00856.1"/>
    <property type="match status" value="1"/>
</dbReference>
<dbReference type="PANTHER" id="PTHR45753:SF6">
    <property type="entry name" value="ASPARTATE CARBAMOYLTRANSFERASE"/>
    <property type="match status" value="1"/>
</dbReference>
<dbReference type="PANTHER" id="PTHR45753">
    <property type="entry name" value="ORNITHINE CARBAMOYLTRANSFERASE, MITOCHONDRIAL"/>
    <property type="match status" value="1"/>
</dbReference>
<dbReference type="Pfam" id="PF00185">
    <property type="entry name" value="OTCace"/>
    <property type="match status" value="1"/>
</dbReference>
<dbReference type="Pfam" id="PF02729">
    <property type="entry name" value="OTCace_N"/>
    <property type="match status" value="1"/>
</dbReference>
<dbReference type="PRINTS" id="PR00100">
    <property type="entry name" value="AOTCASE"/>
</dbReference>
<dbReference type="PRINTS" id="PR00101">
    <property type="entry name" value="ATCASE"/>
</dbReference>
<dbReference type="SUPFAM" id="SSF53671">
    <property type="entry name" value="Aspartate/ornithine carbamoyltransferase"/>
    <property type="match status" value="1"/>
</dbReference>
<dbReference type="PROSITE" id="PS00097">
    <property type="entry name" value="CARBAMOYLTRANSFERASE"/>
    <property type="match status" value="1"/>
</dbReference>